<proteinExistence type="inferred from homology"/>
<sequence>MTESHIDFRRAKFLISAPDIAHLDQYLPGDVGVEIAFAGRSNAGKSSALNALTEQKNLARTSKTPGRTQLINVFELDAQRRLVDLPGYGFAQVPLAMKLKWQQSLGEYLQKRACLSGVVVLMDIRHPLKDLDMQMIEWAVASEIPVLALLTKSDKLAQSAKMKTVNEVRKALVEFGDWVQVEPFSALKGTGKPKVLSILNEWCHPQWLADELENQEDAE</sequence>
<evidence type="ECO:0000255" key="1">
    <source>
        <dbReference type="HAMAP-Rule" id="MF_00321"/>
    </source>
</evidence>
<feature type="chain" id="PRO_0000266946" description="Probable GTP-binding protein EngB">
    <location>
        <begin position="1"/>
        <end position="219"/>
    </location>
</feature>
<feature type="domain" description="EngB-type G" evidence="1">
    <location>
        <begin position="31"/>
        <end position="205"/>
    </location>
</feature>
<feature type="binding site" evidence="1">
    <location>
        <begin position="39"/>
        <end position="46"/>
    </location>
    <ligand>
        <name>GTP</name>
        <dbReference type="ChEBI" id="CHEBI:37565"/>
    </ligand>
</feature>
<feature type="binding site" evidence="1">
    <location>
        <position position="46"/>
    </location>
    <ligand>
        <name>Mg(2+)</name>
        <dbReference type="ChEBI" id="CHEBI:18420"/>
    </ligand>
</feature>
<feature type="binding site" evidence="1">
    <location>
        <begin position="66"/>
        <end position="70"/>
    </location>
    <ligand>
        <name>GTP</name>
        <dbReference type="ChEBI" id="CHEBI:37565"/>
    </ligand>
</feature>
<feature type="binding site" evidence="1">
    <location>
        <position position="68"/>
    </location>
    <ligand>
        <name>Mg(2+)</name>
        <dbReference type="ChEBI" id="CHEBI:18420"/>
    </ligand>
</feature>
<feature type="binding site" evidence="1">
    <location>
        <begin position="84"/>
        <end position="87"/>
    </location>
    <ligand>
        <name>GTP</name>
        <dbReference type="ChEBI" id="CHEBI:37565"/>
    </ligand>
</feature>
<feature type="binding site" evidence="1">
    <location>
        <begin position="151"/>
        <end position="154"/>
    </location>
    <ligand>
        <name>GTP</name>
        <dbReference type="ChEBI" id="CHEBI:37565"/>
    </ligand>
</feature>
<feature type="binding site" evidence="1">
    <location>
        <begin position="184"/>
        <end position="186"/>
    </location>
    <ligand>
        <name>GTP</name>
        <dbReference type="ChEBI" id="CHEBI:37565"/>
    </ligand>
</feature>
<name>ENGB_SHESR</name>
<comment type="function">
    <text evidence="1">Necessary for normal cell division and for the maintenance of normal septation.</text>
</comment>
<comment type="cofactor">
    <cofactor evidence="1">
        <name>Mg(2+)</name>
        <dbReference type="ChEBI" id="CHEBI:18420"/>
    </cofactor>
</comment>
<comment type="similarity">
    <text evidence="1">Belongs to the TRAFAC class TrmE-Era-EngA-EngB-Septin-like GTPase superfamily. EngB GTPase family.</text>
</comment>
<accession>Q0HPI0</accession>
<keyword id="KW-0131">Cell cycle</keyword>
<keyword id="KW-0132">Cell division</keyword>
<keyword id="KW-0342">GTP-binding</keyword>
<keyword id="KW-0460">Magnesium</keyword>
<keyword id="KW-0479">Metal-binding</keyword>
<keyword id="KW-0547">Nucleotide-binding</keyword>
<keyword id="KW-0717">Septation</keyword>
<organism>
    <name type="scientific">Shewanella sp. (strain MR-7)</name>
    <dbReference type="NCBI Taxonomy" id="60481"/>
    <lineage>
        <taxon>Bacteria</taxon>
        <taxon>Pseudomonadati</taxon>
        <taxon>Pseudomonadota</taxon>
        <taxon>Gammaproteobacteria</taxon>
        <taxon>Alteromonadales</taxon>
        <taxon>Shewanellaceae</taxon>
        <taxon>Shewanella</taxon>
    </lineage>
</organism>
<protein>
    <recommendedName>
        <fullName evidence="1">Probable GTP-binding protein EngB</fullName>
    </recommendedName>
</protein>
<dbReference type="EMBL" id="CP000444">
    <property type="protein sequence ID" value="ABI44975.1"/>
    <property type="molecule type" value="Genomic_DNA"/>
</dbReference>
<dbReference type="SMR" id="Q0HPI0"/>
<dbReference type="KEGG" id="shm:Shewmr7_3998"/>
<dbReference type="HOGENOM" id="CLU_033732_1_2_6"/>
<dbReference type="GO" id="GO:0005829">
    <property type="term" value="C:cytosol"/>
    <property type="evidence" value="ECO:0007669"/>
    <property type="project" value="TreeGrafter"/>
</dbReference>
<dbReference type="GO" id="GO:0005525">
    <property type="term" value="F:GTP binding"/>
    <property type="evidence" value="ECO:0007669"/>
    <property type="project" value="UniProtKB-UniRule"/>
</dbReference>
<dbReference type="GO" id="GO:0046872">
    <property type="term" value="F:metal ion binding"/>
    <property type="evidence" value="ECO:0007669"/>
    <property type="project" value="UniProtKB-KW"/>
</dbReference>
<dbReference type="GO" id="GO:0000917">
    <property type="term" value="P:division septum assembly"/>
    <property type="evidence" value="ECO:0007669"/>
    <property type="project" value="UniProtKB-KW"/>
</dbReference>
<dbReference type="CDD" id="cd01876">
    <property type="entry name" value="YihA_EngB"/>
    <property type="match status" value="1"/>
</dbReference>
<dbReference type="FunFam" id="3.40.50.300:FF:000098">
    <property type="entry name" value="Probable GTP-binding protein EngB"/>
    <property type="match status" value="1"/>
</dbReference>
<dbReference type="Gene3D" id="3.40.50.300">
    <property type="entry name" value="P-loop containing nucleotide triphosphate hydrolases"/>
    <property type="match status" value="1"/>
</dbReference>
<dbReference type="HAMAP" id="MF_00321">
    <property type="entry name" value="GTPase_EngB"/>
    <property type="match status" value="1"/>
</dbReference>
<dbReference type="InterPro" id="IPR030393">
    <property type="entry name" value="G_ENGB_dom"/>
</dbReference>
<dbReference type="InterPro" id="IPR006073">
    <property type="entry name" value="GTP-bd"/>
</dbReference>
<dbReference type="InterPro" id="IPR019987">
    <property type="entry name" value="GTP-bd_ribosome_bio_YsxC"/>
</dbReference>
<dbReference type="InterPro" id="IPR027417">
    <property type="entry name" value="P-loop_NTPase"/>
</dbReference>
<dbReference type="NCBIfam" id="TIGR03598">
    <property type="entry name" value="GTPase_YsxC"/>
    <property type="match status" value="1"/>
</dbReference>
<dbReference type="PANTHER" id="PTHR11649:SF13">
    <property type="entry name" value="ENGB-TYPE G DOMAIN-CONTAINING PROTEIN"/>
    <property type="match status" value="1"/>
</dbReference>
<dbReference type="PANTHER" id="PTHR11649">
    <property type="entry name" value="MSS1/TRME-RELATED GTP-BINDING PROTEIN"/>
    <property type="match status" value="1"/>
</dbReference>
<dbReference type="Pfam" id="PF01926">
    <property type="entry name" value="MMR_HSR1"/>
    <property type="match status" value="1"/>
</dbReference>
<dbReference type="SUPFAM" id="SSF52540">
    <property type="entry name" value="P-loop containing nucleoside triphosphate hydrolases"/>
    <property type="match status" value="1"/>
</dbReference>
<dbReference type="PROSITE" id="PS51706">
    <property type="entry name" value="G_ENGB"/>
    <property type="match status" value="1"/>
</dbReference>
<gene>
    <name evidence="1" type="primary">engB</name>
    <name type="ordered locus">Shewmr7_3998</name>
</gene>
<reference key="1">
    <citation type="submission" date="2006-08" db="EMBL/GenBank/DDBJ databases">
        <title>Complete sequence of chromosome 1 of Shewanella sp. MR-7.</title>
        <authorList>
            <person name="Copeland A."/>
            <person name="Lucas S."/>
            <person name="Lapidus A."/>
            <person name="Barry K."/>
            <person name="Detter J.C."/>
            <person name="Glavina del Rio T."/>
            <person name="Hammon N."/>
            <person name="Israni S."/>
            <person name="Dalin E."/>
            <person name="Tice H."/>
            <person name="Pitluck S."/>
            <person name="Kiss H."/>
            <person name="Brettin T."/>
            <person name="Bruce D."/>
            <person name="Han C."/>
            <person name="Tapia R."/>
            <person name="Gilna P."/>
            <person name="Schmutz J."/>
            <person name="Larimer F."/>
            <person name="Land M."/>
            <person name="Hauser L."/>
            <person name="Kyrpides N."/>
            <person name="Mikhailova N."/>
            <person name="Nealson K."/>
            <person name="Konstantinidis K."/>
            <person name="Klappenbach J."/>
            <person name="Tiedje J."/>
            <person name="Richardson P."/>
        </authorList>
    </citation>
    <scope>NUCLEOTIDE SEQUENCE [LARGE SCALE GENOMIC DNA]</scope>
    <source>
        <strain>MR-7</strain>
    </source>
</reference>